<sequence>MKVAVLGAGAWGTALAGHLAARHDTLLWARDAALIAGLQARHENSRYLDGIALPDALRYDADLGAALAHGAADDALCVIAAPVAGLRTLCHAMRDAGCVPAHVVWVCKGFEADTHLLPHQVIAAELPEQQSNGVLSGPSFAREVGRSLPVALTVASASAECRERTLAAFHHGAMRIYTGDDVVGVEVGGAVKNVLAIATGISDGLGLGLNARAALITRGLAEMSRLGVALGGRAETFTGLTGLGDLILTATGDLSRNRTVGLQLAAGRTLNDILGALGHVAEGVRCAQAVLALARAQSIDMPITQAVCGVLFDGIAPRDAVSGLLRRDARAE</sequence>
<reference key="1">
    <citation type="submission" date="2008-02" db="EMBL/GenBank/DDBJ databases">
        <title>Complete sequence of chromosome 1 of Burkholderia cenocepacia MC0-3.</title>
        <authorList>
            <person name="Copeland A."/>
            <person name="Lucas S."/>
            <person name="Lapidus A."/>
            <person name="Barry K."/>
            <person name="Bruce D."/>
            <person name="Goodwin L."/>
            <person name="Glavina del Rio T."/>
            <person name="Dalin E."/>
            <person name="Tice H."/>
            <person name="Pitluck S."/>
            <person name="Chain P."/>
            <person name="Malfatti S."/>
            <person name="Shin M."/>
            <person name="Vergez L."/>
            <person name="Schmutz J."/>
            <person name="Larimer F."/>
            <person name="Land M."/>
            <person name="Hauser L."/>
            <person name="Kyrpides N."/>
            <person name="Mikhailova N."/>
            <person name="Tiedje J."/>
            <person name="Richardson P."/>
        </authorList>
    </citation>
    <scope>NUCLEOTIDE SEQUENCE [LARGE SCALE GENOMIC DNA]</scope>
    <source>
        <strain>MC0-3</strain>
    </source>
</reference>
<feature type="chain" id="PRO_1000123125" description="Glycerol-3-phosphate dehydrogenase [NAD(P)+]">
    <location>
        <begin position="1"/>
        <end position="332"/>
    </location>
</feature>
<feature type="active site" description="Proton acceptor" evidence="1">
    <location>
        <position position="192"/>
    </location>
</feature>
<feature type="binding site" evidence="1">
    <location>
        <position position="11"/>
    </location>
    <ligand>
        <name>NADPH</name>
        <dbReference type="ChEBI" id="CHEBI:57783"/>
    </ligand>
</feature>
<feature type="binding site" evidence="1">
    <location>
        <position position="30"/>
    </location>
    <ligand>
        <name>NADPH</name>
        <dbReference type="ChEBI" id="CHEBI:57783"/>
    </ligand>
</feature>
<feature type="binding site" evidence="1">
    <location>
        <position position="108"/>
    </location>
    <ligand>
        <name>NADPH</name>
        <dbReference type="ChEBI" id="CHEBI:57783"/>
    </ligand>
</feature>
<feature type="binding site" evidence="1">
    <location>
        <position position="108"/>
    </location>
    <ligand>
        <name>sn-glycerol 3-phosphate</name>
        <dbReference type="ChEBI" id="CHEBI:57597"/>
    </ligand>
</feature>
<feature type="binding site" evidence="1">
    <location>
        <position position="137"/>
    </location>
    <ligand>
        <name>sn-glycerol 3-phosphate</name>
        <dbReference type="ChEBI" id="CHEBI:57597"/>
    </ligand>
</feature>
<feature type="binding site" evidence="1">
    <location>
        <position position="139"/>
    </location>
    <ligand>
        <name>sn-glycerol 3-phosphate</name>
        <dbReference type="ChEBI" id="CHEBI:57597"/>
    </ligand>
</feature>
<feature type="binding site" evidence="1">
    <location>
        <position position="141"/>
    </location>
    <ligand>
        <name>NADPH</name>
        <dbReference type="ChEBI" id="CHEBI:57783"/>
    </ligand>
</feature>
<feature type="binding site" evidence="1">
    <location>
        <position position="192"/>
    </location>
    <ligand>
        <name>sn-glycerol 3-phosphate</name>
        <dbReference type="ChEBI" id="CHEBI:57597"/>
    </ligand>
</feature>
<feature type="binding site" evidence="1">
    <location>
        <position position="245"/>
    </location>
    <ligand>
        <name>sn-glycerol 3-phosphate</name>
        <dbReference type="ChEBI" id="CHEBI:57597"/>
    </ligand>
</feature>
<feature type="binding site" evidence="1">
    <location>
        <position position="255"/>
    </location>
    <ligand>
        <name>sn-glycerol 3-phosphate</name>
        <dbReference type="ChEBI" id="CHEBI:57597"/>
    </ligand>
</feature>
<feature type="binding site" evidence="1">
    <location>
        <position position="256"/>
    </location>
    <ligand>
        <name>NADPH</name>
        <dbReference type="ChEBI" id="CHEBI:57783"/>
    </ligand>
</feature>
<feature type="binding site" evidence="1">
    <location>
        <position position="256"/>
    </location>
    <ligand>
        <name>sn-glycerol 3-phosphate</name>
        <dbReference type="ChEBI" id="CHEBI:57597"/>
    </ligand>
</feature>
<feature type="binding site" evidence="1">
    <location>
        <position position="257"/>
    </location>
    <ligand>
        <name>sn-glycerol 3-phosphate</name>
        <dbReference type="ChEBI" id="CHEBI:57597"/>
    </ligand>
</feature>
<feature type="binding site" evidence="1">
    <location>
        <position position="280"/>
    </location>
    <ligand>
        <name>NADPH</name>
        <dbReference type="ChEBI" id="CHEBI:57783"/>
    </ligand>
</feature>
<feature type="binding site" evidence="1">
    <location>
        <position position="282"/>
    </location>
    <ligand>
        <name>NADPH</name>
        <dbReference type="ChEBI" id="CHEBI:57783"/>
    </ligand>
</feature>
<keyword id="KW-0963">Cytoplasm</keyword>
<keyword id="KW-0444">Lipid biosynthesis</keyword>
<keyword id="KW-0443">Lipid metabolism</keyword>
<keyword id="KW-0520">NAD</keyword>
<keyword id="KW-0521">NADP</keyword>
<keyword id="KW-0547">Nucleotide-binding</keyword>
<keyword id="KW-0560">Oxidoreductase</keyword>
<keyword id="KW-0594">Phospholipid biosynthesis</keyword>
<keyword id="KW-1208">Phospholipid metabolism</keyword>
<accession>B1JZ57</accession>
<organism>
    <name type="scientific">Burkholderia orbicola (strain MC0-3)</name>
    <dbReference type="NCBI Taxonomy" id="406425"/>
    <lineage>
        <taxon>Bacteria</taxon>
        <taxon>Pseudomonadati</taxon>
        <taxon>Pseudomonadota</taxon>
        <taxon>Betaproteobacteria</taxon>
        <taxon>Burkholderiales</taxon>
        <taxon>Burkholderiaceae</taxon>
        <taxon>Burkholderia</taxon>
        <taxon>Burkholderia cepacia complex</taxon>
        <taxon>Burkholderia orbicola</taxon>
    </lineage>
</organism>
<comment type="function">
    <text evidence="1">Catalyzes the reduction of the glycolytic intermediate dihydroxyacetone phosphate (DHAP) to sn-glycerol 3-phosphate (G3P), the key precursor for phospholipid synthesis.</text>
</comment>
<comment type="catalytic activity">
    <reaction evidence="1">
        <text>sn-glycerol 3-phosphate + NAD(+) = dihydroxyacetone phosphate + NADH + H(+)</text>
        <dbReference type="Rhea" id="RHEA:11092"/>
        <dbReference type="ChEBI" id="CHEBI:15378"/>
        <dbReference type="ChEBI" id="CHEBI:57540"/>
        <dbReference type="ChEBI" id="CHEBI:57597"/>
        <dbReference type="ChEBI" id="CHEBI:57642"/>
        <dbReference type="ChEBI" id="CHEBI:57945"/>
        <dbReference type="EC" id="1.1.1.94"/>
    </reaction>
    <physiologicalReaction direction="right-to-left" evidence="1">
        <dbReference type="Rhea" id="RHEA:11094"/>
    </physiologicalReaction>
</comment>
<comment type="catalytic activity">
    <reaction evidence="1">
        <text>sn-glycerol 3-phosphate + NADP(+) = dihydroxyacetone phosphate + NADPH + H(+)</text>
        <dbReference type="Rhea" id="RHEA:11096"/>
        <dbReference type="ChEBI" id="CHEBI:15378"/>
        <dbReference type="ChEBI" id="CHEBI:57597"/>
        <dbReference type="ChEBI" id="CHEBI:57642"/>
        <dbReference type="ChEBI" id="CHEBI:57783"/>
        <dbReference type="ChEBI" id="CHEBI:58349"/>
        <dbReference type="EC" id="1.1.1.94"/>
    </reaction>
    <physiologicalReaction direction="right-to-left" evidence="1">
        <dbReference type="Rhea" id="RHEA:11098"/>
    </physiologicalReaction>
</comment>
<comment type="pathway">
    <text evidence="1">Membrane lipid metabolism; glycerophospholipid metabolism.</text>
</comment>
<comment type="subcellular location">
    <subcellularLocation>
        <location evidence="1">Cytoplasm</location>
    </subcellularLocation>
</comment>
<comment type="similarity">
    <text evidence="1">Belongs to the NAD-dependent glycerol-3-phosphate dehydrogenase family.</text>
</comment>
<protein>
    <recommendedName>
        <fullName evidence="1">Glycerol-3-phosphate dehydrogenase [NAD(P)+]</fullName>
        <ecNumber evidence="1">1.1.1.94</ecNumber>
    </recommendedName>
    <alternativeName>
        <fullName evidence="1">NAD(P)(+)-dependent glycerol-3-phosphate dehydrogenase</fullName>
    </alternativeName>
    <alternativeName>
        <fullName evidence="1">NAD(P)H-dependent dihydroxyacetone-phosphate reductase</fullName>
    </alternativeName>
</protein>
<name>GPDA_BURO0</name>
<evidence type="ECO:0000255" key="1">
    <source>
        <dbReference type="HAMAP-Rule" id="MF_00394"/>
    </source>
</evidence>
<dbReference type="EC" id="1.1.1.94" evidence="1"/>
<dbReference type="EMBL" id="CP000958">
    <property type="protein sequence ID" value="ACA92023.1"/>
    <property type="molecule type" value="Genomic_DNA"/>
</dbReference>
<dbReference type="RefSeq" id="WP_012329274.1">
    <property type="nucleotide sequence ID" value="NC_010508.1"/>
</dbReference>
<dbReference type="SMR" id="B1JZ57"/>
<dbReference type="GeneID" id="83049647"/>
<dbReference type="KEGG" id="bcm:Bcenmc03_2864"/>
<dbReference type="HOGENOM" id="CLU_033449_0_2_4"/>
<dbReference type="UniPathway" id="UPA00940"/>
<dbReference type="Proteomes" id="UP000002169">
    <property type="component" value="Chromosome 1"/>
</dbReference>
<dbReference type="GO" id="GO:0005829">
    <property type="term" value="C:cytosol"/>
    <property type="evidence" value="ECO:0007669"/>
    <property type="project" value="TreeGrafter"/>
</dbReference>
<dbReference type="GO" id="GO:0047952">
    <property type="term" value="F:glycerol-3-phosphate dehydrogenase [NAD(P)+] activity"/>
    <property type="evidence" value="ECO:0007669"/>
    <property type="project" value="UniProtKB-UniRule"/>
</dbReference>
<dbReference type="GO" id="GO:0051287">
    <property type="term" value="F:NAD binding"/>
    <property type="evidence" value="ECO:0007669"/>
    <property type="project" value="InterPro"/>
</dbReference>
<dbReference type="GO" id="GO:0005975">
    <property type="term" value="P:carbohydrate metabolic process"/>
    <property type="evidence" value="ECO:0007669"/>
    <property type="project" value="InterPro"/>
</dbReference>
<dbReference type="GO" id="GO:0046167">
    <property type="term" value="P:glycerol-3-phosphate biosynthetic process"/>
    <property type="evidence" value="ECO:0007669"/>
    <property type="project" value="UniProtKB-UniRule"/>
</dbReference>
<dbReference type="GO" id="GO:0046168">
    <property type="term" value="P:glycerol-3-phosphate catabolic process"/>
    <property type="evidence" value="ECO:0007669"/>
    <property type="project" value="InterPro"/>
</dbReference>
<dbReference type="GO" id="GO:0006650">
    <property type="term" value="P:glycerophospholipid metabolic process"/>
    <property type="evidence" value="ECO:0007669"/>
    <property type="project" value="UniProtKB-UniRule"/>
</dbReference>
<dbReference type="GO" id="GO:0008654">
    <property type="term" value="P:phospholipid biosynthetic process"/>
    <property type="evidence" value="ECO:0007669"/>
    <property type="project" value="UniProtKB-KW"/>
</dbReference>
<dbReference type="FunFam" id="1.10.1040.10:FF:000001">
    <property type="entry name" value="Glycerol-3-phosphate dehydrogenase [NAD(P)+]"/>
    <property type="match status" value="1"/>
</dbReference>
<dbReference type="FunFam" id="3.40.50.720:FF:000019">
    <property type="entry name" value="Glycerol-3-phosphate dehydrogenase [NAD(P)+]"/>
    <property type="match status" value="1"/>
</dbReference>
<dbReference type="Gene3D" id="1.10.1040.10">
    <property type="entry name" value="N-(1-d-carboxylethyl)-l-norvaline Dehydrogenase, domain 2"/>
    <property type="match status" value="1"/>
</dbReference>
<dbReference type="Gene3D" id="3.40.50.720">
    <property type="entry name" value="NAD(P)-binding Rossmann-like Domain"/>
    <property type="match status" value="1"/>
</dbReference>
<dbReference type="HAMAP" id="MF_00394">
    <property type="entry name" value="NAD_Glyc3P_dehydrog"/>
    <property type="match status" value="1"/>
</dbReference>
<dbReference type="InterPro" id="IPR008927">
    <property type="entry name" value="6-PGluconate_DH-like_C_sf"/>
</dbReference>
<dbReference type="InterPro" id="IPR013328">
    <property type="entry name" value="6PGD_dom2"/>
</dbReference>
<dbReference type="InterPro" id="IPR006168">
    <property type="entry name" value="G3P_DH_NAD-dep"/>
</dbReference>
<dbReference type="InterPro" id="IPR006109">
    <property type="entry name" value="G3P_DH_NAD-dep_C"/>
</dbReference>
<dbReference type="InterPro" id="IPR011128">
    <property type="entry name" value="G3P_DH_NAD-dep_N"/>
</dbReference>
<dbReference type="InterPro" id="IPR036291">
    <property type="entry name" value="NAD(P)-bd_dom_sf"/>
</dbReference>
<dbReference type="NCBIfam" id="NF000940">
    <property type="entry name" value="PRK00094.1-2"/>
    <property type="match status" value="1"/>
</dbReference>
<dbReference type="NCBIfam" id="NF000942">
    <property type="entry name" value="PRK00094.1-4"/>
    <property type="match status" value="1"/>
</dbReference>
<dbReference type="PANTHER" id="PTHR11728">
    <property type="entry name" value="GLYCEROL-3-PHOSPHATE DEHYDROGENASE"/>
    <property type="match status" value="1"/>
</dbReference>
<dbReference type="PANTHER" id="PTHR11728:SF1">
    <property type="entry name" value="GLYCEROL-3-PHOSPHATE DEHYDROGENASE [NAD(+)] 2, CHLOROPLASTIC"/>
    <property type="match status" value="1"/>
</dbReference>
<dbReference type="Pfam" id="PF07479">
    <property type="entry name" value="NAD_Gly3P_dh_C"/>
    <property type="match status" value="1"/>
</dbReference>
<dbReference type="Pfam" id="PF01210">
    <property type="entry name" value="NAD_Gly3P_dh_N"/>
    <property type="match status" value="1"/>
</dbReference>
<dbReference type="PIRSF" id="PIRSF000114">
    <property type="entry name" value="Glycerol-3-P_dh"/>
    <property type="match status" value="1"/>
</dbReference>
<dbReference type="PRINTS" id="PR00077">
    <property type="entry name" value="GPDHDRGNASE"/>
</dbReference>
<dbReference type="SUPFAM" id="SSF48179">
    <property type="entry name" value="6-phosphogluconate dehydrogenase C-terminal domain-like"/>
    <property type="match status" value="1"/>
</dbReference>
<dbReference type="SUPFAM" id="SSF51735">
    <property type="entry name" value="NAD(P)-binding Rossmann-fold domains"/>
    <property type="match status" value="1"/>
</dbReference>
<dbReference type="PROSITE" id="PS00957">
    <property type="entry name" value="NAD_G3PDH"/>
    <property type="match status" value="1"/>
</dbReference>
<proteinExistence type="inferred from homology"/>
<gene>
    <name evidence="1" type="primary">gpsA</name>
    <name type="ordered locus">Bcenmc03_2864</name>
</gene>